<organism>
    <name type="scientific">Escherichia coli (strain UTI89 / UPEC)</name>
    <dbReference type="NCBI Taxonomy" id="364106"/>
    <lineage>
        <taxon>Bacteria</taxon>
        <taxon>Pseudomonadati</taxon>
        <taxon>Pseudomonadota</taxon>
        <taxon>Gammaproteobacteria</taxon>
        <taxon>Enterobacterales</taxon>
        <taxon>Enterobacteriaceae</taxon>
        <taxon>Escherichia</taxon>
    </lineage>
</organism>
<gene>
    <name evidence="1" type="primary">potA</name>
    <name type="ordered locus">UTI89_C1254</name>
</gene>
<sequence length="378" mass="43055">MGQSKKLNKQPNSLSPLVQLAGIRKCFDGKEVIPQLDLTINNGEFLTLLGPSGCGKTTVLRLIAGLETVDSGRIMLDNEDITHVPAENRYVNTVFQSYALFPHMTVFENVAFGLRMQKTPAAEITPRVMEALRMVQLETFAQRKPHQLSGGQQQRVAIARAVVNKPRLLLLDESLSALDYKLRKQMQNELKALQRKLGITFVFVTHDQEEALTMSDRIVVMRDGRIEQDGTPREIYEEPKNLFVAGFIGEINMFNATVIERLDEQRVRANVEGRECNIYVNFAVEPGQKLHVLLRPEDLRVEEINDDNHAEGLIGYVRERNYKGMTLESVVELENGKMVMVSEFFNEDDPDFDHSLDQKMAINWVESWEVVLADEEHK</sequence>
<proteinExistence type="inferred from homology"/>
<evidence type="ECO:0000255" key="1">
    <source>
        <dbReference type="HAMAP-Rule" id="MF_01726"/>
    </source>
</evidence>
<feature type="chain" id="PRO_0000286216" description="Spermidine/putrescine import ATP-binding protein PotA">
    <location>
        <begin position="1"/>
        <end position="378"/>
    </location>
</feature>
<feature type="domain" description="ABC transporter" evidence="1">
    <location>
        <begin position="18"/>
        <end position="248"/>
    </location>
</feature>
<feature type="binding site" evidence="1">
    <location>
        <begin position="50"/>
        <end position="57"/>
    </location>
    <ligand>
        <name>ATP</name>
        <dbReference type="ChEBI" id="CHEBI:30616"/>
    </ligand>
</feature>
<protein>
    <recommendedName>
        <fullName evidence="1">Spermidine/putrescine import ATP-binding protein PotA</fullName>
        <ecNumber evidence="1">7.6.2.11</ecNumber>
    </recommendedName>
</protein>
<accession>Q1RD28</accession>
<keyword id="KW-0067">ATP-binding</keyword>
<keyword id="KW-0997">Cell inner membrane</keyword>
<keyword id="KW-1003">Cell membrane</keyword>
<keyword id="KW-0472">Membrane</keyword>
<keyword id="KW-0547">Nucleotide-binding</keyword>
<keyword id="KW-1278">Translocase</keyword>
<keyword id="KW-0813">Transport</keyword>
<reference key="1">
    <citation type="journal article" date="2006" name="Proc. Natl. Acad. Sci. U.S.A.">
        <title>Identification of genes subject to positive selection in uropathogenic strains of Escherichia coli: a comparative genomics approach.</title>
        <authorList>
            <person name="Chen S.L."/>
            <person name="Hung C.-S."/>
            <person name="Xu J."/>
            <person name="Reigstad C.S."/>
            <person name="Magrini V."/>
            <person name="Sabo A."/>
            <person name="Blasiar D."/>
            <person name="Bieri T."/>
            <person name="Meyer R.R."/>
            <person name="Ozersky P."/>
            <person name="Armstrong J.R."/>
            <person name="Fulton R.S."/>
            <person name="Latreille J.P."/>
            <person name="Spieth J."/>
            <person name="Hooton T.M."/>
            <person name="Mardis E.R."/>
            <person name="Hultgren S.J."/>
            <person name="Gordon J.I."/>
        </authorList>
    </citation>
    <scope>NUCLEOTIDE SEQUENCE [LARGE SCALE GENOMIC DNA]</scope>
    <source>
        <strain>UTI89 / UPEC</strain>
    </source>
</reference>
<name>POTA_ECOUT</name>
<dbReference type="EC" id="7.6.2.11" evidence="1"/>
<dbReference type="EMBL" id="CP000243">
    <property type="protein sequence ID" value="ABE06736.1"/>
    <property type="molecule type" value="Genomic_DNA"/>
</dbReference>
<dbReference type="RefSeq" id="WP_000531578.1">
    <property type="nucleotide sequence ID" value="NZ_CP064825.1"/>
</dbReference>
<dbReference type="SMR" id="Q1RD28"/>
<dbReference type="KEGG" id="eci:UTI89_C1254"/>
<dbReference type="HOGENOM" id="CLU_000604_1_1_6"/>
<dbReference type="Proteomes" id="UP000001952">
    <property type="component" value="Chromosome"/>
</dbReference>
<dbReference type="GO" id="GO:0043190">
    <property type="term" value="C:ATP-binding cassette (ABC) transporter complex"/>
    <property type="evidence" value="ECO:0007669"/>
    <property type="project" value="InterPro"/>
</dbReference>
<dbReference type="GO" id="GO:0015594">
    <property type="term" value="F:ABC-type putrescine transporter activity"/>
    <property type="evidence" value="ECO:0007669"/>
    <property type="project" value="InterPro"/>
</dbReference>
<dbReference type="GO" id="GO:0005524">
    <property type="term" value="F:ATP binding"/>
    <property type="evidence" value="ECO:0007669"/>
    <property type="project" value="UniProtKB-KW"/>
</dbReference>
<dbReference type="GO" id="GO:0016887">
    <property type="term" value="F:ATP hydrolysis activity"/>
    <property type="evidence" value="ECO:0007669"/>
    <property type="project" value="InterPro"/>
</dbReference>
<dbReference type="CDD" id="cd03300">
    <property type="entry name" value="ABC_PotA_N"/>
    <property type="match status" value="1"/>
</dbReference>
<dbReference type="FunFam" id="2.40.50.100:FF:000017">
    <property type="entry name" value="Spermidine/putrescine import ATP-binding protein PotA"/>
    <property type="match status" value="1"/>
</dbReference>
<dbReference type="FunFam" id="3.40.50.300:FF:000133">
    <property type="entry name" value="Spermidine/putrescine import ATP-binding protein PotA"/>
    <property type="match status" value="1"/>
</dbReference>
<dbReference type="Gene3D" id="2.40.50.100">
    <property type="match status" value="1"/>
</dbReference>
<dbReference type="Gene3D" id="3.40.50.300">
    <property type="entry name" value="P-loop containing nucleotide triphosphate hydrolases"/>
    <property type="match status" value="1"/>
</dbReference>
<dbReference type="InterPro" id="IPR003593">
    <property type="entry name" value="AAA+_ATPase"/>
</dbReference>
<dbReference type="InterPro" id="IPR050093">
    <property type="entry name" value="ABC_SmlMolc_Importer"/>
</dbReference>
<dbReference type="InterPro" id="IPR003439">
    <property type="entry name" value="ABC_transporter-like_ATP-bd"/>
</dbReference>
<dbReference type="InterPro" id="IPR017871">
    <property type="entry name" value="ABC_transporter-like_CS"/>
</dbReference>
<dbReference type="InterPro" id="IPR008995">
    <property type="entry name" value="Mo/tungstate-bd_C_term_dom"/>
</dbReference>
<dbReference type="InterPro" id="IPR027417">
    <property type="entry name" value="P-loop_NTPase"/>
</dbReference>
<dbReference type="InterPro" id="IPR005893">
    <property type="entry name" value="PotA-like"/>
</dbReference>
<dbReference type="InterPro" id="IPR017879">
    <property type="entry name" value="PotA_ATP-bd"/>
</dbReference>
<dbReference type="InterPro" id="IPR013611">
    <property type="entry name" value="Transp-assoc_OB_typ2"/>
</dbReference>
<dbReference type="NCBIfam" id="TIGR01187">
    <property type="entry name" value="potA"/>
    <property type="match status" value="1"/>
</dbReference>
<dbReference type="NCBIfam" id="NF006987">
    <property type="entry name" value="PRK09452.1"/>
    <property type="match status" value="1"/>
</dbReference>
<dbReference type="PANTHER" id="PTHR42781">
    <property type="entry name" value="SPERMIDINE/PUTRESCINE IMPORT ATP-BINDING PROTEIN POTA"/>
    <property type="match status" value="1"/>
</dbReference>
<dbReference type="PANTHER" id="PTHR42781:SF4">
    <property type="entry name" value="SPERMIDINE_PUTRESCINE IMPORT ATP-BINDING PROTEIN POTA"/>
    <property type="match status" value="1"/>
</dbReference>
<dbReference type="Pfam" id="PF00005">
    <property type="entry name" value="ABC_tran"/>
    <property type="match status" value="1"/>
</dbReference>
<dbReference type="Pfam" id="PF08402">
    <property type="entry name" value="TOBE_2"/>
    <property type="match status" value="1"/>
</dbReference>
<dbReference type="SMART" id="SM00382">
    <property type="entry name" value="AAA"/>
    <property type="match status" value="1"/>
</dbReference>
<dbReference type="SUPFAM" id="SSF50331">
    <property type="entry name" value="MOP-like"/>
    <property type="match status" value="1"/>
</dbReference>
<dbReference type="SUPFAM" id="SSF52540">
    <property type="entry name" value="P-loop containing nucleoside triphosphate hydrolases"/>
    <property type="match status" value="1"/>
</dbReference>
<dbReference type="PROSITE" id="PS00211">
    <property type="entry name" value="ABC_TRANSPORTER_1"/>
    <property type="match status" value="1"/>
</dbReference>
<dbReference type="PROSITE" id="PS50893">
    <property type="entry name" value="ABC_TRANSPORTER_2"/>
    <property type="match status" value="1"/>
</dbReference>
<dbReference type="PROSITE" id="PS51305">
    <property type="entry name" value="POTA"/>
    <property type="match status" value="1"/>
</dbReference>
<comment type="function">
    <text evidence="1">Part of the ABC transporter complex PotABCD involved in spermidine/putrescine import. Responsible for energy coupling to the transport system.</text>
</comment>
<comment type="catalytic activity">
    <reaction evidence="1">
        <text>ATP + H2O + polyamine-[polyamine-binding protein]Side 1 = ADP + phosphate + polyamineSide 2 + [polyamine-binding protein]Side 1.</text>
        <dbReference type="EC" id="7.6.2.11"/>
    </reaction>
</comment>
<comment type="subunit">
    <text evidence="1">The complex is composed of two ATP-binding proteins (PotA), two transmembrane proteins (PotB and PotC) and a solute-binding protein (PotD).</text>
</comment>
<comment type="subcellular location">
    <subcellularLocation>
        <location evidence="1">Cell inner membrane</location>
        <topology evidence="1">Peripheral membrane protein</topology>
    </subcellularLocation>
</comment>
<comment type="similarity">
    <text evidence="1">Belongs to the ABC transporter superfamily. Spermidine/putrescine importer (TC 3.A.1.11.1) family.</text>
</comment>